<dbReference type="EC" id="1.1.1.262" evidence="1"/>
<dbReference type="EMBL" id="CP000880">
    <property type="protein sequence ID" value="ABX22759.1"/>
    <property type="molecule type" value="Genomic_DNA"/>
</dbReference>
<dbReference type="SMR" id="A9MQG1"/>
<dbReference type="STRING" id="41514.SARI_02913"/>
<dbReference type="KEGG" id="ses:SARI_02913"/>
<dbReference type="HOGENOM" id="CLU_040168_1_0_6"/>
<dbReference type="UniPathway" id="UPA00244">
    <property type="reaction ID" value="UER00312"/>
</dbReference>
<dbReference type="Proteomes" id="UP000002084">
    <property type="component" value="Chromosome"/>
</dbReference>
<dbReference type="GO" id="GO:0005737">
    <property type="term" value="C:cytoplasm"/>
    <property type="evidence" value="ECO:0007669"/>
    <property type="project" value="UniProtKB-SubCell"/>
</dbReference>
<dbReference type="GO" id="GO:0050570">
    <property type="term" value="F:4-hydroxythreonine-4-phosphate dehydrogenase activity"/>
    <property type="evidence" value="ECO:0007669"/>
    <property type="project" value="UniProtKB-UniRule"/>
</dbReference>
<dbReference type="GO" id="GO:0050897">
    <property type="term" value="F:cobalt ion binding"/>
    <property type="evidence" value="ECO:0007669"/>
    <property type="project" value="UniProtKB-UniRule"/>
</dbReference>
<dbReference type="GO" id="GO:0000287">
    <property type="term" value="F:magnesium ion binding"/>
    <property type="evidence" value="ECO:0007669"/>
    <property type="project" value="UniProtKB-UniRule"/>
</dbReference>
<dbReference type="GO" id="GO:0051287">
    <property type="term" value="F:NAD binding"/>
    <property type="evidence" value="ECO:0007669"/>
    <property type="project" value="InterPro"/>
</dbReference>
<dbReference type="GO" id="GO:0008270">
    <property type="term" value="F:zinc ion binding"/>
    <property type="evidence" value="ECO:0007669"/>
    <property type="project" value="UniProtKB-UniRule"/>
</dbReference>
<dbReference type="GO" id="GO:0042823">
    <property type="term" value="P:pyridoxal phosphate biosynthetic process"/>
    <property type="evidence" value="ECO:0007669"/>
    <property type="project" value="UniProtKB-UniRule"/>
</dbReference>
<dbReference type="GO" id="GO:0008615">
    <property type="term" value="P:pyridoxine biosynthetic process"/>
    <property type="evidence" value="ECO:0007669"/>
    <property type="project" value="UniProtKB-UniRule"/>
</dbReference>
<dbReference type="FunFam" id="3.40.718.10:FF:000010">
    <property type="entry name" value="4-hydroxythreonine-4-phosphate dehydrogenase"/>
    <property type="match status" value="1"/>
</dbReference>
<dbReference type="Gene3D" id="3.40.718.10">
    <property type="entry name" value="Isopropylmalate Dehydrogenase"/>
    <property type="match status" value="1"/>
</dbReference>
<dbReference type="HAMAP" id="MF_00536">
    <property type="entry name" value="PdxA"/>
    <property type="match status" value="1"/>
</dbReference>
<dbReference type="InterPro" id="IPR037510">
    <property type="entry name" value="PdxA"/>
</dbReference>
<dbReference type="InterPro" id="IPR005255">
    <property type="entry name" value="PdxA_fam"/>
</dbReference>
<dbReference type="NCBIfam" id="TIGR00557">
    <property type="entry name" value="pdxA"/>
    <property type="match status" value="1"/>
</dbReference>
<dbReference type="PANTHER" id="PTHR30004">
    <property type="entry name" value="4-HYDROXYTHREONINE-4-PHOSPHATE DEHYDROGENASE"/>
    <property type="match status" value="1"/>
</dbReference>
<dbReference type="PANTHER" id="PTHR30004:SF5">
    <property type="entry name" value="4-HYDROXYTHREONINE-4-PHOSPHATE DEHYDROGENASE"/>
    <property type="match status" value="1"/>
</dbReference>
<dbReference type="Pfam" id="PF04166">
    <property type="entry name" value="PdxA"/>
    <property type="match status" value="1"/>
</dbReference>
<dbReference type="SUPFAM" id="SSF53659">
    <property type="entry name" value="Isocitrate/Isopropylmalate dehydrogenase-like"/>
    <property type="match status" value="1"/>
</dbReference>
<organism>
    <name type="scientific">Salmonella arizonae (strain ATCC BAA-731 / CDC346-86 / RSK2980)</name>
    <dbReference type="NCBI Taxonomy" id="41514"/>
    <lineage>
        <taxon>Bacteria</taxon>
        <taxon>Pseudomonadati</taxon>
        <taxon>Pseudomonadota</taxon>
        <taxon>Gammaproteobacteria</taxon>
        <taxon>Enterobacterales</taxon>
        <taxon>Enterobacteriaceae</taxon>
        <taxon>Salmonella</taxon>
    </lineage>
</organism>
<keyword id="KW-0170">Cobalt</keyword>
<keyword id="KW-0963">Cytoplasm</keyword>
<keyword id="KW-0460">Magnesium</keyword>
<keyword id="KW-0479">Metal-binding</keyword>
<keyword id="KW-0520">NAD</keyword>
<keyword id="KW-0521">NADP</keyword>
<keyword id="KW-0560">Oxidoreductase</keyword>
<keyword id="KW-0664">Pyridoxine biosynthesis</keyword>
<keyword id="KW-1185">Reference proteome</keyword>
<keyword id="KW-0862">Zinc</keyword>
<proteinExistence type="inferred from homology"/>
<feature type="chain" id="PRO_1000081869" description="4-hydroxythreonine-4-phosphate dehydrogenase">
    <location>
        <begin position="1"/>
        <end position="329"/>
    </location>
</feature>
<feature type="binding site" evidence="1">
    <location>
        <position position="136"/>
    </location>
    <ligand>
        <name>substrate</name>
    </ligand>
</feature>
<feature type="binding site" evidence="1">
    <location>
        <position position="137"/>
    </location>
    <ligand>
        <name>substrate</name>
    </ligand>
</feature>
<feature type="binding site" evidence="1">
    <location>
        <position position="166"/>
    </location>
    <ligand>
        <name>a divalent metal cation</name>
        <dbReference type="ChEBI" id="CHEBI:60240"/>
        <note>ligand shared between dimeric partners</note>
    </ligand>
</feature>
<feature type="binding site" evidence="1">
    <location>
        <position position="211"/>
    </location>
    <ligand>
        <name>a divalent metal cation</name>
        <dbReference type="ChEBI" id="CHEBI:60240"/>
        <note>ligand shared between dimeric partners</note>
    </ligand>
</feature>
<feature type="binding site" evidence="1">
    <location>
        <position position="266"/>
    </location>
    <ligand>
        <name>a divalent metal cation</name>
        <dbReference type="ChEBI" id="CHEBI:60240"/>
        <note>ligand shared between dimeric partners</note>
    </ligand>
</feature>
<feature type="binding site" evidence="1">
    <location>
        <position position="274"/>
    </location>
    <ligand>
        <name>substrate</name>
    </ligand>
</feature>
<feature type="binding site" evidence="1">
    <location>
        <position position="283"/>
    </location>
    <ligand>
        <name>substrate</name>
    </ligand>
</feature>
<feature type="binding site" evidence="1">
    <location>
        <position position="292"/>
    </location>
    <ligand>
        <name>substrate</name>
    </ligand>
</feature>
<name>PDXA_SALAR</name>
<comment type="function">
    <text evidence="1">Catalyzes the NAD(P)-dependent oxidation of 4-(phosphooxy)-L-threonine (HTP) into 2-amino-3-oxo-4-(phosphooxy)butyric acid which spontaneously decarboxylates to form 3-amino-2-oxopropyl phosphate (AHAP).</text>
</comment>
<comment type="catalytic activity">
    <reaction evidence="1">
        <text>4-(phosphooxy)-L-threonine + NAD(+) = 3-amino-2-oxopropyl phosphate + CO2 + NADH</text>
        <dbReference type="Rhea" id="RHEA:32275"/>
        <dbReference type="ChEBI" id="CHEBI:16526"/>
        <dbReference type="ChEBI" id="CHEBI:57279"/>
        <dbReference type="ChEBI" id="CHEBI:57540"/>
        <dbReference type="ChEBI" id="CHEBI:57945"/>
        <dbReference type="ChEBI" id="CHEBI:58452"/>
        <dbReference type="EC" id="1.1.1.262"/>
    </reaction>
</comment>
<comment type="cofactor">
    <cofactor evidence="1">
        <name>Zn(2+)</name>
        <dbReference type="ChEBI" id="CHEBI:29105"/>
    </cofactor>
    <cofactor evidence="1">
        <name>Mg(2+)</name>
        <dbReference type="ChEBI" id="CHEBI:18420"/>
    </cofactor>
    <cofactor evidence="1">
        <name>Co(2+)</name>
        <dbReference type="ChEBI" id="CHEBI:48828"/>
    </cofactor>
    <text evidence="1">Binds 1 divalent metal cation per subunit. Can use ions such as Zn(2+), Mg(2+) or Co(2+).</text>
</comment>
<comment type="pathway">
    <text evidence="1">Cofactor biosynthesis; pyridoxine 5'-phosphate biosynthesis; pyridoxine 5'-phosphate from D-erythrose 4-phosphate: step 4/5.</text>
</comment>
<comment type="subunit">
    <text evidence="1">Homodimer.</text>
</comment>
<comment type="subcellular location">
    <subcellularLocation>
        <location evidence="1">Cytoplasm</location>
    </subcellularLocation>
</comment>
<comment type="miscellaneous">
    <text evidence="1">The active site is located at the dimer interface.</text>
</comment>
<comment type="similarity">
    <text evidence="1">Belongs to the PdxA family.</text>
</comment>
<evidence type="ECO:0000255" key="1">
    <source>
        <dbReference type="HAMAP-Rule" id="MF_00536"/>
    </source>
</evidence>
<sequence length="329" mass="34916">MSSAQRVVITPGEPAGIGPDLVVQLAQRAWPIELVVCADGPLLTERAAMLGLPLSLLPYSPDVPAAPQPAGTLTLLPVSLRAPAIPGQLTVENGPYVVETLARACDGCLQHEFAALITGPVHKGVINDAGIPFTGHTEFFEERSQAKKVVMMLATEALRVALATTHLPLRAIADAITPALLHDVIAILHHDLRTKFGLRNPHILVCGLNPHAGEGGHMGTEEIDTIIPVLDELRAQGMHLTGPLPADTLFQPKYLDHADAVLAMYHDQGLPVLKYQGFGRGVNITLGLPFIRTSVDHGTALELAGQGKADVGSFITALNLAIKMIVNTQ</sequence>
<gene>
    <name evidence="1" type="primary">pdxA</name>
    <name type="ordered locus">SARI_02913</name>
</gene>
<reference key="1">
    <citation type="submission" date="2007-11" db="EMBL/GenBank/DDBJ databases">
        <authorList>
            <consortium name="The Salmonella enterica serovar Arizonae Genome Sequencing Project"/>
            <person name="McClelland M."/>
            <person name="Sanderson E.K."/>
            <person name="Porwollik S."/>
            <person name="Spieth J."/>
            <person name="Clifton W.S."/>
            <person name="Fulton R."/>
            <person name="Chunyan W."/>
            <person name="Wollam A."/>
            <person name="Shah N."/>
            <person name="Pepin K."/>
            <person name="Bhonagiri V."/>
            <person name="Nash W."/>
            <person name="Johnson M."/>
            <person name="Thiruvilangam P."/>
            <person name="Wilson R."/>
        </authorList>
    </citation>
    <scope>NUCLEOTIDE SEQUENCE [LARGE SCALE GENOMIC DNA]</scope>
    <source>
        <strain>ATCC BAA-731 / CDC346-86 / RSK2980</strain>
    </source>
</reference>
<protein>
    <recommendedName>
        <fullName evidence="1">4-hydroxythreonine-4-phosphate dehydrogenase</fullName>
        <ecNumber evidence="1">1.1.1.262</ecNumber>
    </recommendedName>
    <alternativeName>
        <fullName evidence="1">4-(phosphohydroxy)-L-threonine dehydrogenase</fullName>
    </alternativeName>
</protein>
<accession>A9MQG1</accession>